<reference key="1">
    <citation type="journal article" date="2004" name="Mol. Biol. Evol.">
        <title>Chloroplast phylogeny indicates that bryophytes are monophyletic.</title>
        <authorList>
            <person name="Nishiyama T."/>
            <person name="Wolf P.G."/>
            <person name="Kugita M."/>
            <person name="Sinclair R.B."/>
            <person name="Sugita M."/>
            <person name="Sugiura C."/>
            <person name="Wakasugi T."/>
            <person name="Yamada K."/>
            <person name="Yoshinaga K."/>
            <person name="Yamaguchi K."/>
            <person name="Ueda K."/>
            <person name="Hasebe M."/>
        </authorList>
    </citation>
    <scope>NUCLEOTIDE SEQUENCE [LARGE SCALE GENOMIC DNA]</scope>
    <source>
        <strain>Kingyoku</strain>
    </source>
</reference>
<name>ATPI_PSINU</name>
<evidence type="ECO:0000255" key="1">
    <source>
        <dbReference type="HAMAP-Rule" id="MF_01393"/>
    </source>
</evidence>
<organism>
    <name type="scientific">Psilotum nudum</name>
    <name type="common">Whisk fern</name>
    <name type="synonym">Lycopodium nudum</name>
    <dbReference type="NCBI Taxonomy" id="3240"/>
    <lineage>
        <taxon>Eukaryota</taxon>
        <taxon>Viridiplantae</taxon>
        <taxon>Streptophyta</taxon>
        <taxon>Embryophyta</taxon>
        <taxon>Tracheophyta</taxon>
        <taxon>Polypodiopsida</taxon>
        <taxon>Ophioglossidae</taxon>
        <taxon>Psilotales</taxon>
        <taxon>Psilotaceae</taxon>
        <taxon>Psilotum</taxon>
    </lineage>
</organism>
<geneLocation type="chloroplast"/>
<proteinExistence type="inferred from homology"/>
<gene>
    <name evidence="1" type="primary">atpI</name>
</gene>
<feature type="chain" id="PRO_0000362596" description="ATP synthase subunit a, chloroplastic">
    <location>
        <begin position="1"/>
        <end position="248"/>
    </location>
</feature>
<feature type="transmembrane region" description="Helical" evidence="1">
    <location>
        <begin position="37"/>
        <end position="57"/>
    </location>
</feature>
<feature type="transmembrane region" description="Helical" evidence="1">
    <location>
        <begin position="96"/>
        <end position="116"/>
    </location>
</feature>
<feature type="transmembrane region" description="Helical" evidence="1">
    <location>
        <begin position="135"/>
        <end position="155"/>
    </location>
</feature>
<feature type="transmembrane region" description="Helical" evidence="1">
    <location>
        <begin position="200"/>
        <end position="220"/>
    </location>
</feature>
<feature type="transmembrane region" description="Helical" evidence="1">
    <location>
        <begin position="221"/>
        <end position="241"/>
    </location>
</feature>
<dbReference type="EMBL" id="AP004638">
    <property type="protein sequence ID" value="BAB84204.1"/>
    <property type="molecule type" value="Genomic_DNA"/>
</dbReference>
<dbReference type="RefSeq" id="NP_569617.1">
    <property type="nucleotide sequence ID" value="NC_003386.1"/>
</dbReference>
<dbReference type="SMR" id="Q8WI28"/>
<dbReference type="GeneID" id="2545109"/>
<dbReference type="GO" id="GO:0009535">
    <property type="term" value="C:chloroplast thylakoid membrane"/>
    <property type="evidence" value="ECO:0007669"/>
    <property type="project" value="UniProtKB-SubCell"/>
</dbReference>
<dbReference type="GO" id="GO:0005886">
    <property type="term" value="C:plasma membrane"/>
    <property type="evidence" value="ECO:0007669"/>
    <property type="project" value="UniProtKB-UniRule"/>
</dbReference>
<dbReference type="GO" id="GO:0045259">
    <property type="term" value="C:proton-transporting ATP synthase complex"/>
    <property type="evidence" value="ECO:0007669"/>
    <property type="project" value="UniProtKB-KW"/>
</dbReference>
<dbReference type="GO" id="GO:0046933">
    <property type="term" value="F:proton-transporting ATP synthase activity, rotational mechanism"/>
    <property type="evidence" value="ECO:0007669"/>
    <property type="project" value="UniProtKB-UniRule"/>
</dbReference>
<dbReference type="CDD" id="cd00310">
    <property type="entry name" value="ATP-synt_Fo_a_6"/>
    <property type="match status" value="1"/>
</dbReference>
<dbReference type="FunFam" id="1.20.120.220:FF:000001">
    <property type="entry name" value="ATP synthase subunit a, chloroplastic"/>
    <property type="match status" value="1"/>
</dbReference>
<dbReference type="Gene3D" id="1.20.120.220">
    <property type="entry name" value="ATP synthase, F0 complex, subunit A"/>
    <property type="match status" value="1"/>
</dbReference>
<dbReference type="HAMAP" id="MF_01393">
    <property type="entry name" value="ATP_synth_a_bact"/>
    <property type="match status" value="1"/>
</dbReference>
<dbReference type="InterPro" id="IPR045082">
    <property type="entry name" value="ATP_syn_F0_a_bact/chloroplast"/>
</dbReference>
<dbReference type="InterPro" id="IPR000568">
    <property type="entry name" value="ATP_synth_F0_asu"/>
</dbReference>
<dbReference type="InterPro" id="IPR023011">
    <property type="entry name" value="ATP_synth_F0_asu_AS"/>
</dbReference>
<dbReference type="InterPro" id="IPR035908">
    <property type="entry name" value="F0_ATP_A_sf"/>
</dbReference>
<dbReference type="NCBIfam" id="TIGR01131">
    <property type="entry name" value="ATP_synt_6_or_A"/>
    <property type="match status" value="1"/>
</dbReference>
<dbReference type="PANTHER" id="PTHR42823">
    <property type="entry name" value="ATP SYNTHASE SUBUNIT A, CHLOROPLASTIC"/>
    <property type="match status" value="1"/>
</dbReference>
<dbReference type="PANTHER" id="PTHR42823:SF3">
    <property type="entry name" value="ATP SYNTHASE SUBUNIT A, CHLOROPLASTIC"/>
    <property type="match status" value="1"/>
</dbReference>
<dbReference type="Pfam" id="PF00119">
    <property type="entry name" value="ATP-synt_A"/>
    <property type="match status" value="1"/>
</dbReference>
<dbReference type="PRINTS" id="PR00123">
    <property type="entry name" value="ATPASEA"/>
</dbReference>
<dbReference type="SUPFAM" id="SSF81336">
    <property type="entry name" value="F1F0 ATP synthase subunit A"/>
    <property type="match status" value="1"/>
</dbReference>
<dbReference type="PROSITE" id="PS00449">
    <property type="entry name" value="ATPASE_A"/>
    <property type="match status" value="1"/>
</dbReference>
<protein>
    <recommendedName>
        <fullName evidence="1">ATP synthase subunit a, chloroplastic</fullName>
    </recommendedName>
    <alternativeName>
        <fullName evidence="1">ATP synthase F0 sector subunit a</fullName>
    </alternativeName>
    <alternativeName>
        <fullName evidence="1">F-ATPase subunit IV</fullName>
    </alternativeName>
</protein>
<accession>Q8WI28</accession>
<comment type="function">
    <text evidence="1">Key component of the proton channel; it plays a direct role in the translocation of protons across the membrane.</text>
</comment>
<comment type="subunit">
    <text evidence="1">F-type ATPases have 2 components, CF(1) - the catalytic core - and CF(0) - the membrane proton channel. CF(1) has five subunits: alpha(3), beta(3), gamma(1), delta(1), epsilon(1). CF(0) has four main subunits: a, b, b' and c.</text>
</comment>
<comment type="subcellular location">
    <subcellularLocation>
        <location evidence="1">Plastid</location>
        <location evidence="1">Chloroplast thylakoid membrane</location>
        <topology evidence="1">Multi-pass membrane protein</topology>
    </subcellularLocation>
</comment>
<comment type="similarity">
    <text evidence="1">Belongs to the ATPase A chain family.</text>
</comment>
<sequence>MNIEKHLISLINDLCQISGVEVGQHFYWQLGGFQVHAQVLITSWVVIVLLSGLAFVTTRDLRTIPTGGQNFVEYVLEFIRDLTRTQIGEEEYRPWVPFIGTLFLFIFVSNWSGALFPWKIIQLPHGELAAPTNDINTTVALALLTSVAYFYAGLHKKGLSYFGRYIKPTPILLPINILEDFTKPLSLSFRLFGNILADELVVAVLISLVPLVVPIPMMFLGLFTSAIQALIFATLAAAYIGESMEGHH</sequence>
<keyword id="KW-0066">ATP synthesis</keyword>
<keyword id="KW-0138">CF(0)</keyword>
<keyword id="KW-0150">Chloroplast</keyword>
<keyword id="KW-0375">Hydrogen ion transport</keyword>
<keyword id="KW-0406">Ion transport</keyword>
<keyword id="KW-0472">Membrane</keyword>
<keyword id="KW-0934">Plastid</keyword>
<keyword id="KW-0793">Thylakoid</keyword>
<keyword id="KW-0812">Transmembrane</keyword>
<keyword id="KW-1133">Transmembrane helix</keyword>
<keyword id="KW-0813">Transport</keyword>